<proteinExistence type="inferred from homology"/>
<reference key="1">
    <citation type="journal article" date="1995" name="Science">
        <title>The minimal gene complement of Mycoplasma genitalium.</title>
        <authorList>
            <person name="Fraser C.M."/>
            <person name="Gocayne J.D."/>
            <person name="White O."/>
            <person name="Adams M.D."/>
            <person name="Clayton R.A."/>
            <person name="Fleischmann R.D."/>
            <person name="Bult C.J."/>
            <person name="Kerlavage A.R."/>
            <person name="Sutton G.G."/>
            <person name="Kelley J.M."/>
            <person name="Fritchman J.L."/>
            <person name="Weidman J.F."/>
            <person name="Small K.V."/>
            <person name="Sandusky M."/>
            <person name="Fuhrmann J.L."/>
            <person name="Nguyen D.T."/>
            <person name="Utterback T.R."/>
            <person name="Saudek D.M."/>
            <person name="Phillips C.A."/>
            <person name="Merrick J.M."/>
            <person name="Tomb J.-F."/>
            <person name="Dougherty B.A."/>
            <person name="Bott K.F."/>
            <person name="Hu P.-C."/>
            <person name="Lucier T.S."/>
            <person name="Peterson S.N."/>
            <person name="Smith H.O."/>
            <person name="Hutchison C.A. III"/>
            <person name="Venter J.C."/>
        </authorList>
    </citation>
    <scope>NUCLEOTIDE SEQUENCE [LARGE SCALE GENOMIC DNA]</scope>
    <source>
        <strain>ATCC 33530 / DSM 19775 / NCTC 10195 / G37</strain>
    </source>
</reference>
<evidence type="ECO:0000250" key="1"/>
<evidence type="ECO:0000255" key="2"/>
<evidence type="ECO:0000255" key="3">
    <source>
        <dbReference type="PROSITE-ProRule" id="PRU00421"/>
    </source>
</evidence>
<evidence type="ECO:0000305" key="4"/>
<name>Y129_MYCGE</name>
<organism>
    <name type="scientific">Mycoplasma genitalium (strain ATCC 33530 / DSM 19775 / NCTC 10195 / G37)</name>
    <name type="common">Mycoplasmoides genitalium</name>
    <dbReference type="NCBI Taxonomy" id="243273"/>
    <lineage>
        <taxon>Bacteria</taxon>
        <taxon>Bacillati</taxon>
        <taxon>Mycoplasmatota</taxon>
        <taxon>Mycoplasmoidales</taxon>
        <taxon>Mycoplasmoidaceae</taxon>
        <taxon>Mycoplasmoides</taxon>
    </lineage>
</organism>
<accession>Q49397</accession>
<comment type="function">
    <text evidence="1">The phosphoenolpyruvate-dependent sugar phosphotransferase system (PTS), a major carbohydrate active -transport system, catalyzes the phosphorylation of incoming sugar substrates concomitant with their translocation across the cell membrane.</text>
</comment>
<comment type="subcellular location">
    <subcellularLocation>
        <location evidence="4">Membrane</location>
        <topology evidence="4">Single-pass membrane protein</topology>
    </subcellularLocation>
</comment>
<comment type="domain">
    <text>The EIIB domain is phosphorylated by phospho-EIIA on a cysteinyl or histidyl residue, depending on the transported sugar. Then, it transfers the phosphoryl group to the sugar substrate concomitantly with the sugar uptake processed by the EIIC domain.</text>
</comment>
<dbReference type="EC" id="2.7.1.-"/>
<dbReference type="EMBL" id="L43967">
    <property type="protein sequence ID" value="AAC71347.1"/>
    <property type="molecule type" value="Genomic_DNA"/>
</dbReference>
<dbReference type="PIR" id="C64214">
    <property type="entry name" value="C64214"/>
</dbReference>
<dbReference type="RefSeq" id="WP_009885683.1">
    <property type="nucleotide sequence ID" value="NC_000908.2"/>
</dbReference>
<dbReference type="SMR" id="Q49397"/>
<dbReference type="STRING" id="243273.MG_129"/>
<dbReference type="GeneID" id="88282253"/>
<dbReference type="KEGG" id="mge:MG_129"/>
<dbReference type="eggNOG" id="COG1264">
    <property type="taxonomic scope" value="Bacteria"/>
</dbReference>
<dbReference type="HOGENOM" id="CLU_2082212_0_0_14"/>
<dbReference type="InParanoid" id="Q49397"/>
<dbReference type="OrthoDB" id="9769191at2"/>
<dbReference type="BioCyc" id="MGEN243273:G1GJ2-142-MONOMER"/>
<dbReference type="Proteomes" id="UP000000807">
    <property type="component" value="Chromosome"/>
</dbReference>
<dbReference type="GO" id="GO:0016020">
    <property type="term" value="C:membrane"/>
    <property type="evidence" value="ECO:0007669"/>
    <property type="project" value="UniProtKB-SubCell"/>
</dbReference>
<dbReference type="GO" id="GO:0008982">
    <property type="term" value="F:protein-N(PI)-phosphohistidine-sugar phosphotransferase activity"/>
    <property type="evidence" value="ECO:0007669"/>
    <property type="project" value="InterPro"/>
</dbReference>
<dbReference type="GO" id="GO:0009401">
    <property type="term" value="P:phosphoenolpyruvate-dependent sugar phosphotransferase system"/>
    <property type="evidence" value="ECO:0007669"/>
    <property type="project" value="UniProtKB-KW"/>
</dbReference>
<dbReference type="Gene3D" id="3.30.1360.60">
    <property type="entry name" value="Glucose permease domain IIB"/>
    <property type="match status" value="1"/>
</dbReference>
<dbReference type="InterPro" id="IPR036878">
    <property type="entry name" value="Glu_permease_IIB"/>
</dbReference>
<dbReference type="InterPro" id="IPR001996">
    <property type="entry name" value="PTS_IIB_1"/>
</dbReference>
<dbReference type="SUPFAM" id="SSF55604">
    <property type="entry name" value="Glucose permease domain IIB"/>
    <property type="match status" value="1"/>
</dbReference>
<dbReference type="PROSITE" id="PS51098">
    <property type="entry name" value="PTS_EIIB_TYPE_1"/>
    <property type="match status" value="1"/>
</dbReference>
<gene>
    <name type="ordered locus">MG129</name>
</gene>
<sequence>MKWLLWLGYIFSFGLLYLWIVKKSKQIAQQPNTKLVESTSIPFKVKDFVSACGGKENFVNIKTTPTQLIVTFKDVNSVSLTKLNALNIKGINKNQNQFRFVLGNFVNELKKKIEDEQ</sequence>
<protein>
    <recommendedName>
        <fullName>Putative phosphotransferase enzyme IIB component MG129</fullName>
        <ecNumber>2.7.1.-</ecNumber>
    </recommendedName>
    <alternativeName>
        <fullName>Putative PTS system EIIB component</fullName>
    </alternativeName>
</protein>
<feature type="chain" id="PRO_0000210429" description="Putative phosphotransferase enzyme IIB component MG129">
    <location>
        <begin position="1"/>
        <end position="117"/>
    </location>
</feature>
<feature type="transmembrane region" description="Helical" evidence="2">
    <location>
        <begin position="1"/>
        <end position="21"/>
    </location>
</feature>
<feature type="domain" description="PTS EIIB type-1" evidence="3">
    <location>
        <begin position="42"/>
        <end position="117"/>
    </location>
</feature>
<keyword id="KW-0472">Membrane</keyword>
<keyword id="KW-0597">Phosphoprotein</keyword>
<keyword id="KW-0598">Phosphotransferase system</keyword>
<keyword id="KW-1185">Reference proteome</keyword>
<keyword id="KW-0808">Transferase</keyword>
<keyword id="KW-0812">Transmembrane</keyword>
<keyword id="KW-1133">Transmembrane helix</keyword>